<comment type="function">
    <text evidence="2">Component of the ubiquinol-cytochrome c reductase complex (complex III or cytochrome b-c1 complex) that is part of the mitochondrial respiratory chain. The b-c1 complex mediates electron transfer from ubiquinol to cytochrome c. Contributes to the generation of a proton gradient across the mitochondrial membrane that is then used for ATP synthesis.</text>
</comment>
<comment type="cofactor">
    <cofactor evidence="2">
        <name>heme b</name>
        <dbReference type="ChEBI" id="CHEBI:60344"/>
    </cofactor>
    <text evidence="2">Binds 2 heme b groups non-covalently.</text>
</comment>
<comment type="subunit">
    <text evidence="2">The cytochrome bc1 complex contains 11 subunits: 3 respiratory subunits (MT-CYB, CYC1 and UQCRFS1), 2 core proteins (UQCRC1 and UQCRC2) and 6 low-molecular weight proteins (UQCRH/QCR6, UQCRB/QCR7, UQCRQ/QCR8, UQCR10/QCR9, UQCR11/QCR10 and a cleavage product of UQCRFS1). This cytochrome bc1 complex then forms a dimer.</text>
</comment>
<comment type="subcellular location">
    <subcellularLocation>
        <location evidence="2">Mitochondrion inner membrane</location>
        <topology evidence="2">Multi-pass membrane protein</topology>
    </subcellularLocation>
</comment>
<comment type="miscellaneous">
    <text evidence="1">Heme 1 (or BL or b562) is low-potential and absorbs at about 562 nm, and heme 2 (or BH or b566) is high-potential and absorbs at about 566 nm.</text>
</comment>
<comment type="similarity">
    <text evidence="3 4">Belongs to the cytochrome b family.</text>
</comment>
<comment type="caution">
    <text evidence="2">The full-length protein contains only eight transmembrane helices, not nine as predicted by bioinformatics tools.</text>
</comment>
<name>CYB_LONFE</name>
<keyword id="KW-0249">Electron transport</keyword>
<keyword id="KW-0349">Heme</keyword>
<keyword id="KW-0408">Iron</keyword>
<keyword id="KW-0472">Membrane</keyword>
<keyword id="KW-0479">Metal-binding</keyword>
<keyword id="KW-0496">Mitochondrion</keyword>
<keyword id="KW-0999">Mitochondrion inner membrane</keyword>
<keyword id="KW-0679">Respiratory chain</keyword>
<keyword id="KW-0812">Transmembrane</keyword>
<keyword id="KW-1133">Transmembrane helix</keyword>
<keyword id="KW-0813">Transport</keyword>
<keyword id="KW-0830">Ubiquinone</keyword>
<dbReference type="EMBL" id="AF057122">
    <property type="protein sequence ID" value="AAC33702.1"/>
    <property type="molecule type" value="Genomic_DNA"/>
</dbReference>
<dbReference type="SMR" id="O78930"/>
<dbReference type="GO" id="GO:0005743">
    <property type="term" value="C:mitochondrial inner membrane"/>
    <property type="evidence" value="ECO:0007669"/>
    <property type="project" value="UniProtKB-SubCell"/>
</dbReference>
<dbReference type="GO" id="GO:0045275">
    <property type="term" value="C:respiratory chain complex III"/>
    <property type="evidence" value="ECO:0007669"/>
    <property type="project" value="InterPro"/>
</dbReference>
<dbReference type="GO" id="GO:0046872">
    <property type="term" value="F:metal ion binding"/>
    <property type="evidence" value="ECO:0007669"/>
    <property type="project" value="UniProtKB-KW"/>
</dbReference>
<dbReference type="GO" id="GO:0008121">
    <property type="term" value="F:ubiquinol-cytochrome-c reductase activity"/>
    <property type="evidence" value="ECO:0007669"/>
    <property type="project" value="InterPro"/>
</dbReference>
<dbReference type="GO" id="GO:0006122">
    <property type="term" value="P:mitochondrial electron transport, ubiquinol to cytochrome c"/>
    <property type="evidence" value="ECO:0007669"/>
    <property type="project" value="TreeGrafter"/>
</dbReference>
<dbReference type="CDD" id="cd00290">
    <property type="entry name" value="cytochrome_b_C"/>
    <property type="match status" value="1"/>
</dbReference>
<dbReference type="CDD" id="cd00284">
    <property type="entry name" value="Cytochrome_b_N"/>
    <property type="match status" value="1"/>
</dbReference>
<dbReference type="FunFam" id="1.20.810.10:FF:000002">
    <property type="entry name" value="Cytochrome b"/>
    <property type="match status" value="1"/>
</dbReference>
<dbReference type="Gene3D" id="1.20.810.10">
    <property type="entry name" value="Cytochrome Bc1 Complex, Chain C"/>
    <property type="match status" value="1"/>
</dbReference>
<dbReference type="InterPro" id="IPR005798">
    <property type="entry name" value="Cyt_b/b6_C"/>
</dbReference>
<dbReference type="InterPro" id="IPR036150">
    <property type="entry name" value="Cyt_b/b6_C_sf"/>
</dbReference>
<dbReference type="InterPro" id="IPR005797">
    <property type="entry name" value="Cyt_b/b6_N"/>
</dbReference>
<dbReference type="InterPro" id="IPR027387">
    <property type="entry name" value="Cytb/b6-like_sf"/>
</dbReference>
<dbReference type="InterPro" id="IPR030689">
    <property type="entry name" value="Cytochrome_b"/>
</dbReference>
<dbReference type="InterPro" id="IPR048260">
    <property type="entry name" value="Cytochrome_b_C_euk/bac"/>
</dbReference>
<dbReference type="InterPro" id="IPR048259">
    <property type="entry name" value="Cytochrome_b_N_euk/bac"/>
</dbReference>
<dbReference type="InterPro" id="IPR016174">
    <property type="entry name" value="Di-haem_cyt_TM"/>
</dbReference>
<dbReference type="PANTHER" id="PTHR19271">
    <property type="entry name" value="CYTOCHROME B"/>
    <property type="match status" value="1"/>
</dbReference>
<dbReference type="PANTHER" id="PTHR19271:SF16">
    <property type="entry name" value="CYTOCHROME B"/>
    <property type="match status" value="1"/>
</dbReference>
<dbReference type="Pfam" id="PF00032">
    <property type="entry name" value="Cytochrom_B_C"/>
    <property type="match status" value="1"/>
</dbReference>
<dbReference type="Pfam" id="PF00033">
    <property type="entry name" value="Cytochrome_B"/>
    <property type="match status" value="1"/>
</dbReference>
<dbReference type="PIRSF" id="PIRSF038885">
    <property type="entry name" value="COB"/>
    <property type="match status" value="1"/>
</dbReference>
<dbReference type="SUPFAM" id="SSF81648">
    <property type="entry name" value="a domain/subunit of cytochrome bc1 complex (Ubiquinol-cytochrome c reductase)"/>
    <property type="match status" value="1"/>
</dbReference>
<dbReference type="SUPFAM" id="SSF81342">
    <property type="entry name" value="Transmembrane di-heme cytochromes"/>
    <property type="match status" value="1"/>
</dbReference>
<dbReference type="PROSITE" id="PS51003">
    <property type="entry name" value="CYTB_CTER"/>
    <property type="match status" value="1"/>
</dbReference>
<dbReference type="PROSITE" id="PS51002">
    <property type="entry name" value="CYTB_NTER"/>
    <property type="match status" value="1"/>
</dbReference>
<gene>
    <name type="primary">MT-CYB</name>
    <name type="synonym">COB</name>
    <name type="synonym">CYTB</name>
    <name type="synonym">MTCYB</name>
</gene>
<proteinExistence type="inferred from homology"/>
<feature type="chain" id="PRO_0000061132" description="Cytochrome b">
    <location>
        <begin position="1"/>
        <end position="379"/>
    </location>
</feature>
<feature type="transmembrane region" description="Helical" evidence="2">
    <location>
        <begin position="33"/>
        <end position="53"/>
    </location>
</feature>
<feature type="transmembrane region" description="Helical" evidence="2">
    <location>
        <begin position="77"/>
        <end position="98"/>
    </location>
</feature>
<feature type="transmembrane region" description="Helical" evidence="2">
    <location>
        <begin position="113"/>
        <end position="133"/>
    </location>
</feature>
<feature type="transmembrane region" description="Helical" evidence="2">
    <location>
        <begin position="178"/>
        <end position="198"/>
    </location>
</feature>
<feature type="transmembrane region" description="Helical" evidence="2">
    <location>
        <begin position="226"/>
        <end position="246"/>
    </location>
</feature>
<feature type="transmembrane region" description="Helical" evidence="2">
    <location>
        <begin position="288"/>
        <end position="308"/>
    </location>
</feature>
<feature type="transmembrane region" description="Helical" evidence="2">
    <location>
        <begin position="320"/>
        <end position="340"/>
    </location>
</feature>
<feature type="transmembrane region" description="Helical" evidence="2">
    <location>
        <begin position="347"/>
        <end position="367"/>
    </location>
</feature>
<feature type="binding site" description="axial binding residue" evidence="2">
    <location>
        <position position="83"/>
    </location>
    <ligand>
        <name>heme b</name>
        <dbReference type="ChEBI" id="CHEBI:60344"/>
        <label>b562</label>
    </ligand>
    <ligandPart>
        <name>Fe</name>
        <dbReference type="ChEBI" id="CHEBI:18248"/>
    </ligandPart>
</feature>
<feature type="binding site" description="axial binding residue" evidence="2">
    <location>
        <position position="97"/>
    </location>
    <ligand>
        <name>heme b</name>
        <dbReference type="ChEBI" id="CHEBI:60344"/>
        <label>b566</label>
    </ligand>
    <ligandPart>
        <name>Fe</name>
        <dbReference type="ChEBI" id="CHEBI:18248"/>
    </ligandPart>
</feature>
<feature type="binding site" description="axial binding residue" evidence="2">
    <location>
        <position position="182"/>
    </location>
    <ligand>
        <name>heme b</name>
        <dbReference type="ChEBI" id="CHEBI:60344"/>
        <label>b562</label>
    </ligand>
    <ligandPart>
        <name>Fe</name>
        <dbReference type="ChEBI" id="CHEBI:18248"/>
    </ligandPart>
</feature>
<feature type="binding site" description="axial binding residue" evidence="2">
    <location>
        <position position="196"/>
    </location>
    <ligand>
        <name>heme b</name>
        <dbReference type="ChEBI" id="CHEBI:60344"/>
        <label>b566</label>
    </ligand>
    <ligandPart>
        <name>Fe</name>
        <dbReference type="ChEBI" id="CHEBI:18248"/>
    </ligandPart>
</feature>
<feature type="binding site" evidence="2">
    <location>
        <position position="201"/>
    </location>
    <ligand>
        <name>a ubiquinone</name>
        <dbReference type="ChEBI" id="CHEBI:16389"/>
    </ligand>
</feature>
<geneLocation type="mitochondrion"/>
<protein>
    <recommendedName>
        <fullName>Cytochrome b</fullName>
    </recommendedName>
    <alternativeName>
        <fullName>Complex III subunit 3</fullName>
    </alternativeName>
    <alternativeName>
        <fullName>Complex III subunit III</fullName>
    </alternativeName>
    <alternativeName>
        <fullName>Cytochrome b-c1 complex subunit 3</fullName>
    </alternativeName>
    <alternativeName>
        <fullName>Ubiquinol-cytochrome-c reductase complex cytochrome b subunit</fullName>
    </alternativeName>
</protein>
<sequence>MTNIRKTHPLAKIINDSFIDLPAPSNISTWWNFGSLLGICLILQILTGLFLAMHYTSDTTTAFSSVTHICRDVNYGWIIRYMHANGASLFFICLFLHVGRGLYYGSYMFPETWNIGIILLFTVMATAFMGYVLPWGQMSFWGATVITNLLSAIPYIGTNLVEWIWGGFSVDKATLTRFFTFHFILPFIILTLAVIHLLFLHETGSNNPSGIPSNSDKIPFHPYYTVKDALGALLLTLTLMTLVLFSPDLLGDPDNYIPANPLNTPPHIKPEWYFLFAYAILRSIPSKLGGVLALVLSISILAIIPLLHTSKQRSMMFRPLSQCLFWLLVADLLTLTWIGGQPVEHPFIIIGQLASILYFTILLILMPAVGIIENNLLKW</sequence>
<reference key="1">
    <citation type="journal article" date="1998" name="J. Zool. (Lond.)">
        <title>Phylogenetic relationships of otters (Carnivora: Mustelidae) based on mitochondrial cytochrome b sequences.</title>
        <authorList>
            <person name="Koepfli K.-P."/>
            <person name="Wayne R.K."/>
        </authorList>
    </citation>
    <scope>NUCLEOTIDE SEQUENCE [GENOMIC DNA]</scope>
</reference>
<organism>
    <name type="scientific">Lontra felina</name>
    <name type="common">Sea cat</name>
    <name type="synonym">Lutra felina</name>
    <dbReference type="NCBI Taxonomy" id="76718"/>
    <lineage>
        <taxon>Eukaryota</taxon>
        <taxon>Metazoa</taxon>
        <taxon>Chordata</taxon>
        <taxon>Craniata</taxon>
        <taxon>Vertebrata</taxon>
        <taxon>Euteleostomi</taxon>
        <taxon>Mammalia</taxon>
        <taxon>Eutheria</taxon>
        <taxon>Laurasiatheria</taxon>
        <taxon>Carnivora</taxon>
        <taxon>Caniformia</taxon>
        <taxon>Musteloidea</taxon>
        <taxon>Mustelidae</taxon>
        <taxon>Lutrinae</taxon>
        <taxon>Lontra</taxon>
    </lineage>
</organism>
<evidence type="ECO:0000250" key="1"/>
<evidence type="ECO:0000250" key="2">
    <source>
        <dbReference type="UniProtKB" id="P00157"/>
    </source>
</evidence>
<evidence type="ECO:0000255" key="3">
    <source>
        <dbReference type="PROSITE-ProRule" id="PRU00967"/>
    </source>
</evidence>
<evidence type="ECO:0000255" key="4">
    <source>
        <dbReference type="PROSITE-ProRule" id="PRU00968"/>
    </source>
</evidence>
<accession>O78930</accession>